<organism>
    <name type="scientific">Candida albicans (strain WO-1)</name>
    <name type="common">Yeast</name>
    <dbReference type="NCBI Taxonomy" id="294748"/>
    <lineage>
        <taxon>Eukaryota</taxon>
        <taxon>Fungi</taxon>
        <taxon>Dikarya</taxon>
        <taxon>Ascomycota</taxon>
        <taxon>Saccharomycotina</taxon>
        <taxon>Pichiomycetes</taxon>
        <taxon>Debaryomycetaceae</taxon>
        <taxon>Candida/Lodderomyces clade</taxon>
        <taxon>Candida</taxon>
    </lineage>
</organism>
<name>RS3A_CANAW</name>
<evidence type="ECO:0000255" key="1">
    <source>
        <dbReference type="HAMAP-Rule" id="MF_03122"/>
    </source>
</evidence>
<evidence type="ECO:0000305" key="2"/>
<proteinExistence type="inferred from homology"/>
<gene>
    <name evidence="1" type="primary">RPS1</name>
    <name type="synonym">PLC1</name>
    <name type="synonym">RP10</name>
    <name type="synonym">RPS10</name>
    <name type="ORF">CAWG_01075</name>
</gene>
<reference key="1">
    <citation type="journal article" date="2009" name="Nature">
        <title>Evolution of pathogenicity and sexual reproduction in eight Candida genomes.</title>
        <authorList>
            <person name="Butler G."/>
            <person name="Rasmussen M.D."/>
            <person name="Lin M.F."/>
            <person name="Santos M.A.S."/>
            <person name="Sakthikumar S."/>
            <person name="Munro C.A."/>
            <person name="Rheinbay E."/>
            <person name="Grabherr M."/>
            <person name="Forche A."/>
            <person name="Reedy J.L."/>
            <person name="Agrafioti I."/>
            <person name="Arnaud M.B."/>
            <person name="Bates S."/>
            <person name="Brown A.J.P."/>
            <person name="Brunke S."/>
            <person name="Costanzo M.C."/>
            <person name="Fitzpatrick D.A."/>
            <person name="de Groot P.W.J."/>
            <person name="Harris D."/>
            <person name="Hoyer L.L."/>
            <person name="Hube B."/>
            <person name="Klis F.M."/>
            <person name="Kodira C."/>
            <person name="Lennard N."/>
            <person name="Logue M.E."/>
            <person name="Martin R."/>
            <person name="Neiman A.M."/>
            <person name="Nikolaou E."/>
            <person name="Quail M.A."/>
            <person name="Quinn J."/>
            <person name="Santos M.C."/>
            <person name="Schmitzberger F.F."/>
            <person name="Sherlock G."/>
            <person name="Shah P."/>
            <person name="Silverstein K.A.T."/>
            <person name="Skrzypek M.S."/>
            <person name="Soll D."/>
            <person name="Staggs R."/>
            <person name="Stansfield I."/>
            <person name="Stumpf M.P.H."/>
            <person name="Sudbery P.E."/>
            <person name="Srikantha T."/>
            <person name="Zeng Q."/>
            <person name="Berman J."/>
            <person name="Berriman M."/>
            <person name="Heitman J."/>
            <person name="Gow N.A.R."/>
            <person name="Lorenz M.C."/>
            <person name="Birren B.W."/>
            <person name="Kellis M."/>
            <person name="Cuomo C.A."/>
        </authorList>
    </citation>
    <scope>NUCLEOTIDE SEQUENCE [LARGE SCALE GENOMIC DNA]</scope>
    <source>
        <strain>WO-1</strain>
    </source>
</reference>
<sequence>MAVGKNKRLSKGKKGLKKKVVDPFTRKDWFDIKAPTTFENRNVGKTLINRSTGLKNAADGLKGRVFEVCLADLQGSEDHSYRKIKLRVDEVQGKNLLTNFHGLDFTSDKLRSLVRKWQSLVEANVTVKTSDDYVLRVFAIAFTKRQPNQIKKTTYAQSSKLREVRKKMIEIMQREVSNCTLAQLTSKLIPEVIGREIEKSTQTIFPLQNVHIRKVKLLKQPKFDLGSLLALHGEGSTEEKGKKVSSGFKDVVLESV</sequence>
<dbReference type="EMBL" id="CH672346">
    <property type="protein sequence ID" value="EEQ42852.1"/>
    <property type="molecule type" value="Genomic_DNA"/>
</dbReference>
<dbReference type="SMR" id="P0CC07"/>
<dbReference type="PaxDb" id="5476-P0CC07"/>
<dbReference type="VEuPathDB" id="FungiDB:CAWG_01075"/>
<dbReference type="HOGENOM" id="CLU_062507_0_0_1"/>
<dbReference type="OMA" id="TRFKGHE"/>
<dbReference type="OrthoDB" id="6148at766764"/>
<dbReference type="Proteomes" id="UP000001429">
    <property type="component" value="Chromosome 1, Supercontig 1.1"/>
</dbReference>
<dbReference type="GO" id="GO:0022627">
    <property type="term" value="C:cytosolic small ribosomal subunit"/>
    <property type="evidence" value="ECO:0007669"/>
    <property type="project" value="UniProtKB-UniRule"/>
</dbReference>
<dbReference type="GO" id="GO:0003735">
    <property type="term" value="F:structural constituent of ribosome"/>
    <property type="evidence" value="ECO:0007669"/>
    <property type="project" value="UniProtKB-UniRule"/>
</dbReference>
<dbReference type="GO" id="GO:0006412">
    <property type="term" value="P:translation"/>
    <property type="evidence" value="ECO:0007669"/>
    <property type="project" value="UniProtKB-UniRule"/>
</dbReference>
<dbReference type="HAMAP" id="MF_03122">
    <property type="entry name" value="Ribosomal_eS1_euk"/>
    <property type="match status" value="1"/>
</dbReference>
<dbReference type="InterPro" id="IPR001593">
    <property type="entry name" value="Ribosomal_eS1"/>
</dbReference>
<dbReference type="InterPro" id="IPR018281">
    <property type="entry name" value="Ribosomal_eS1_CS"/>
</dbReference>
<dbReference type="InterPro" id="IPR027500">
    <property type="entry name" value="Ribosomal_eS1_euk"/>
</dbReference>
<dbReference type="PANTHER" id="PTHR11830">
    <property type="entry name" value="40S RIBOSOMAL PROTEIN S3A"/>
    <property type="match status" value="1"/>
</dbReference>
<dbReference type="Pfam" id="PF01015">
    <property type="entry name" value="Ribosomal_S3Ae"/>
    <property type="match status" value="1"/>
</dbReference>
<dbReference type="SMART" id="SM01397">
    <property type="entry name" value="Ribosomal_S3Ae"/>
    <property type="match status" value="1"/>
</dbReference>
<dbReference type="PROSITE" id="PS01191">
    <property type="entry name" value="RIBOSOMAL_S3AE"/>
    <property type="match status" value="1"/>
</dbReference>
<accession>P0CC07</accession>
<accession>Q5AI50</accession>
<protein>
    <recommendedName>
        <fullName evidence="1">Small ribosomal subunit protein eS1</fullName>
    </recommendedName>
    <alternativeName>
        <fullName evidence="2">40S ribosomal protein S1</fullName>
    </alternativeName>
</protein>
<feature type="initiator methionine" description="Removed" evidence="1">
    <location>
        <position position="1"/>
    </location>
</feature>
<feature type="chain" id="PRO_0000389562" description="Small ribosomal subunit protein eS1">
    <location>
        <begin position="2"/>
        <end position="256"/>
    </location>
</feature>
<feature type="modified residue" description="N-acetylalanine; partial" evidence="1">
    <location>
        <position position="2"/>
    </location>
</feature>
<comment type="subunit">
    <text evidence="1">Component of the small ribosomal subunit. Mature ribosomes consist of a small (40S) and a large (60S) subunit. The 40S subunit contains about 33 different proteins and 1 molecule of RNA (18S). The 60S subunit contains about 49 different proteins and 3 molecules of RNA (25S, 5.8S and 5S).</text>
</comment>
<comment type="subcellular location">
    <subcellularLocation>
        <location evidence="1">Cytoplasm</location>
    </subcellularLocation>
</comment>
<comment type="similarity">
    <text evidence="1">Belongs to the eukaryotic ribosomal protein eS1 family.</text>
</comment>
<keyword id="KW-0007">Acetylation</keyword>
<keyword id="KW-0963">Cytoplasm</keyword>
<keyword id="KW-0687">Ribonucleoprotein</keyword>
<keyword id="KW-0689">Ribosomal protein</keyword>